<proteinExistence type="inferred from homology"/>
<name>RL33_CHLCH</name>
<reference key="1">
    <citation type="submission" date="2005-08" db="EMBL/GenBank/DDBJ databases">
        <title>Complete sequence of Chlorobium chlorochromatii CaD3.</title>
        <authorList>
            <consortium name="US DOE Joint Genome Institute"/>
            <person name="Copeland A."/>
            <person name="Lucas S."/>
            <person name="Lapidus A."/>
            <person name="Barry K."/>
            <person name="Detter J.C."/>
            <person name="Glavina T."/>
            <person name="Hammon N."/>
            <person name="Israni S."/>
            <person name="Pitluck S."/>
            <person name="Bryant D."/>
            <person name="Schmutz J."/>
            <person name="Larimer F."/>
            <person name="Land M."/>
            <person name="Kyrpides N."/>
            <person name="Ivanova N."/>
            <person name="Richardson P."/>
        </authorList>
    </citation>
    <scope>NUCLEOTIDE SEQUENCE [LARGE SCALE GENOMIC DNA]</scope>
    <source>
        <strain>CaD3</strain>
    </source>
</reference>
<comment type="similarity">
    <text evidence="1">Belongs to the bacterial ribosomal protein bL33 family.</text>
</comment>
<accession>Q3ARK3</accession>
<sequence length="60" mass="7038">MAKGKENRIVITLECTEAKKEGKPVSRYTTTKNKKNTTERLVLKKYNPNLQRHTLHKEIK</sequence>
<evidence type="ECO:0000255" key="1">
    <source>
        <dbReference type="HAMAP-Rule" id="MF_00294"/>
    </source>
</evidence>
<evidence type="ECO:0000305" key="2"/>
<protein>
    <recommendedName>
        <fullName evidence="1">Large ribosomal subunit protein bL33</fullName>
    </recommendedName>
    <alternativeName>
        <fullName evidence="2">50S ribosomal protein L33</fullName>
    </alternativeName>
</protein>
<feature type="chain" id="PRO_1000004154" description="Large ribosomal subunit protein bL33">
    <location>
        <begin position="1"/>
        <end position="60"/>
    </location>
</feature>
<gene>
    <name evidence="1" type="primary">rpmG</name>
    <name type="ordered locus">Cag_1110</name>
</gene>
<organism>
    <name type="scientific">Chlorobium chlorochromatii (strain CaD3)</name>
    <dbReference type="NCBI Taxonomy" id="340177"/>
    <lineage>
        <taxon>Bacteria</taxon>
        <taxon>Pseudomonadati</taxon>
        <taxon>Chlorobiota</taxon>
        <taxon>Chlorobiia</taxon>
        <taxon>Chlorobiales</taxon>
        <taxon>Chlorobiaceae</taxon>
        <taxon>Chlorobium/Pelodictyon group</taxon>
        <taxon>Chlorobium</taxon>
    </lineage>
</organism>
<dbReference type="EMBL" id="CP000108">
    <property type="protein sequence ID" value="ABB28372.1"/>
    <property type="molecule type" value="Genomic_DNA"/>
</dbReference>
<dbReference type="SMR" id="Q3ARK3"/>
<dbReference type="STRING" id="340177.Cag_1110"/>
<dbReference type="KEGG" id="cch:Cag_1110"/>
<dbReference type="eggNOG" id="COG0267">
    <property type="taxonomic scope" value="Bacteria"/>
</dbReference>
<dbReference type="HOGENOM" id="CLU_190949_3_0_10"/>
<dbReference type="GO" id="GO:0005737">
    <property type="term" value="C:cytoplasm"/>
    <property type="evidence" value="ECO:0007669"/>
    <property type="project" value="UniProtKB-ARBA"/>
</dbReference>
<dbReference type="GO" id="GO:1990904">
    <property type="term" value="C:ribonucleoprotein complex"/>
    <property type="evidence" value="ECO:0007669"/>
    <property type="project" value="UniProtKB-KW"/>
</dbReference>
<dbReference type="GO" id="GO:0005840">
    <property type="term" value="C:ribosome"/>
    <property type="evidence" value="ECO:0007669"/>
    <property type="project" value="UniProtKB-KW"/>
</dbReference>
<dbReference type="GO" id="GO:0003735">
    <property type="term" value="F:structural constituent of ribosome"/>
    <property type="evidence" value="ECO:0007669"/>
    <property type="project" value="InterPro"/>
</dbReference>
<dbReference type="GO" id="GO:0006412">
    <property type="term" value="P:translation"/>
    <property type="evidence" value="ECO:0007669"/>
    <property type="project" value="UniProtKB-UniRule"/>
</dbReference>
<dbReference type="Gene3D" id="2.20.28.120">
    <property type="entry name" value="Ribosomal protein L33"/>
    <property type="match status" value="1"/>
</dbReference>
<dbReference type="HAMAP" id="MF_00294">
    <property type="entry name" value="Ribosomal_bL33"/>
    <property type="match status" value="1"/>
</dbReference>
<dbReference type="InterPro" id="IPR001705">
    <property type="entry name" value="Ribosomal_bL33"/>
</dbReference>
<dbReference type="InterPro" id="IPR038584">
    <property type="entry name" value="Ribosomal_bL33_sf"/>
</dbReference>
<dbReference type="InterPro" id="IPR011332">
    <property type="entry name" value="Ribosomal_zn-bd"/>
</dbReference>
<dbReference type="NCBIfam" id="NF001764">
    <property type="entry name" value="PRK00504.1"/>
    <property type="match status" value="1"/>
</dbReference>
<dbReference type="NCBIfam" id="NF001860">
    <property type="entry name" value="PRK00595.1"/>
    <property type="match status" value="1"/>
</dbReference>
<dbReference type="NCBIfam" id="TIGR01023">
    <property type="entry name" value="rpmG_bact"/>
    <property type="match status" value="1"/>
</dbReference>
<dbReference type="PANTHER" id="PTHR43168">
    <property type="entry name" value="50S RIBOSOMAL PROTEIN L33, CHLOROPLASTIC"/>
    <property type="match status" value="1"/>
</dbReference>
<dbReference type="PANTHER" id="PTHR43168:SF2">
    <property type="entry name" value="LARGE RIBOSOMAL SUBUNIT PROTEIN BL33C"/>
    <property type="match status" value="1"/>
</dbReference>
<dbReference type="Pfam" id="PF00471">
    <property type="entry name" value="Ribosomal_L33"/>
    <property type="match status" value="1"/>
</dbReference>
<dbReference type="SUPFAM" id="SSF57829">
    <property type="entry name" value="Zn-binding ribosomal proteins"/>
    <property type="match status" value="1"/>
</dbReference>
<keyword id="KW-0687">Ribonucleoprotein</keyword>
<keyword id="KW-0689">Ribosomal protein</keyword>